<name>HSP30_NEUCR</name>
<dbReference type="EMBL" id="M55672">
    <property type="protein sequence ID" value="AAA33589.1"/>
    <property type="molecule type" value="Genomic_DNA"/>
</dbReference>
<dbReference type="EMBL" id="CM002236">
    <property type="protein sequence ID" value="EAA34538.1"/>
    <property type="molecule type" value="Genomic_DNA"/>
</dbReference>
<dbReference type="PIR" id="A38360">
    <property type="entry name" value="A38360"/>
</dbReference>
<dbReference type="RefSeq" id="XP_963774.1">
    <property type="nucleotide sequence ID" value="XM_958681.3"/>
</dbReference>
<dbReference type="SMR" id="P19752"/>
<dbReference type="STRING" id="367110.P19752"/>
<dbReference type="PaxDb" id="5141-EFNCRP00000009461"/>
<dbReference type="EnsemblFungi" id="EAA34538">
    <property type="protein sequence ID" value="EAA34538"/>
    <property type="gene ID" value="NCU09364"/>
</dbReference>
<dbReference type="GeneID" id="3879923"/>
<dbReference type="KEGG" id="ncr:NCU09364"/>
<dbReference type="VEuPathDB" id="FungiDB:NCU09364"/>
<dbReference type="HOGENOM" id="CLU_046737_1_1_1"/>
<dbReference type="InParanoid" id="P19752"/>
<dbReference type="OMA" id="PIWQPKF"/>
<dbReference type="OrthoDB" id="1431247at2759"/>
<dbReference type="Proteomes" id="UP000001805">
    <property type="component" value="Chromosome 1, Linkage Group I"/>
</dbReference>
<dbReference type="GO" id="GO:0005737">
    <property type="term" value="C:cytoplasm"/>
    <property type="evidence" value="ECO:0007669"/>
    <property type="project" value="UniProtKB-SubCell"/>
</dbReference>
<dbReference type="GO" id="GO:0034605">
    <property type="term" value="P:cellular response to heat"/>
    <property type="evidence" value="ECO:0000318"/>
    <property type="project" value="GO_Central"/>
</dbReference>
<dbReference type="Gene3D" id="2.60.40.790">
    <property type="match status" value="1"/>
</dbReference>
<dbReference type="InterPro" id="IPR002068">
    <property type="entry name" value="A-crystallin/Hsp20_dom"/>
</dbReference>
<dbReference type="InterPro" id="IPR008978">
    <property type="entry name" value="HSP20-like_chaperone"/>
</dbReference>
<dbReference type="InterPro" id="IPR031107">
    <property type="entry name" value="Small_HSP"/>
</dbReference>
<dbReference type="PANTHER" id="PTHR11527">
    <property type="entry name" value="HEAT-SHOCK PROTEIN 20 FAMILY MEMBER"/>
    <property type="match status" value="1"/>
</dbReference>
<dbReference type="Pfam" id="PF00011">
    <property type="entry name" value="HSP20"/>
    <property type="match status" value="1"/>
</dbReference>
<dbReference type="SUPFAM" id="SSF49764">
    <property type="entry name" value="HSP20-like chaperones"/>
    <property type="match status" value="1"/>
</dbReference>
<dbReference type="PROSITE" id="PS01031">
    <property type="entry name" value="SHSP"/>
    <property type="match status" value="1"/>
</dbReference>
<keyword id="KW-0963">Cytoplasm</keyword>
<keyword id="KW-1185">Reference proteome</keyword>
<keyword id="KW-0346">Stress response</keyword>
<comment type="subcellular location">
    <subcellularLocation>
        <location>Cytoplasm</location>
    </subcellularLocation>
    <text>Associated with mitochondria at heat shock temperature, soluble at normal growth temperature (reversibility).</text>
</comment>
<comment type="miscellaneous">
    <text>The N-terminal putative helical domain may be the site through which HSP30 binding to mitochondrial membrane is regulated.</text>
</comment>
<comment type="similarity">
    <text evidence="1">Belongs to the small heat shock protein (HSP20) family.</text>
</comment>
<proteinExistence type="inferred from homology"/>
<reference key="1">
    <citation type="journal article" date="1990" name="J. Biol. Chem.">
        <title>Gene sequence and analysis of hsp30, a small heat shock protein of Neurospora crassa which associates with mitochondria.</title>
        <authorList>
            <person name="Plesofsky-Vig N."/>
            <person name="Brambl R."/>
        </authorList>
    </citation>
    <scope>NUCLEOTIDE SEQUENCE [GENOMIC DNA]</scope>
    <source>
        <strain>ATCC 24698 / 74-OR23-1A / CBS 708.71 / DSM 1257 / FGSC 987</strain>
    </source>
</reference>
<reference key="2">
    <citation type="journal article" date="2003" name="Nature">
        <title>The genome sequence of the filamentous fungus Neurospora crassa.</title>
        <authorList>
            <person name="Galagan J.E."/>
            <person name="Calvo S.E."/>
            <person name="Borkovich K.A."/>
            <person name="Selker E.U."/>
            <person name="Read N.D."/>
            <person name="Jaffe D.B."/>
            <person name="FitzHugh W."/>
            <person name="Ma L.-J."/>
            <person name="Smirnov S."/>
            <person name="Purcell S."/>
            <person name="Rehman B."/>
            <person name="Elkins T."/>
            <person name="Engels R."/>
            <person name="Wang S."/>
            <person name="Nielsen C.B."/>
            <person name="Butler J."/>
            <person name="Endrizzi M."/>
            <person name="Qui D."/>
            <person name="Ianakiev P."/>
            <person name="Bell-Pedersen D."/>
            <person name="Nelson M.A."/>
            <person name="Werner-Washburne M."/>
            <person name="Selitrennikoff C.P."/>
            <person name="Kinsey J.A."/>
            <person name="Braun E.L."/>
            <person name="Zelter A."/>
            <person name="Schulte U."/>
            <person name="Kothe G.O."/>
            <person name="Jedd G."/>
            <person name="Mewes H.-W."/>
            <person name="Staben C."/>
            <person name="Marcotte E."/>
            <person name="Greenberg D."/>
            <person name="Roy A."/>
            <person name="Foley K."/>
            <person name="Naylor J."/>
            <person name="Stange-Thomann N."/>
            <person name="Barrett R."/>
            <person name="Gnerre S."/>
            <person name="Kamal M."/>
            <person name="Kamvysselis M."/>
            <person name="Mauceli E.W."/>
            <person name="Bielke C."/>
            <person name="Rudd S."/>
            <person name="Frishman D."/>
            <person name="Krystofova S."/>
            <person name="Rasmussen C."/>
            <person name="Metzenberg R.L."/>
            <person name="Perkins D.D."/>
            <person name="Kroken S."/>
            <person name="Cogoni C."/>
            <person name="Macino G."/>
            <person name="Catcheside D.E.A."/>
            <person name="Li W."/>
            <person name="Pratt R.J."/>
            <person name="Osmani S.A."/>
            <person name="DeSouza C.P.C."/>
            <person name="Glass N.L."/>
            <person name="Orbach M.J."/>
            <person name="Berglund J.A."/>
            <person name="Voelker R."/>
            <person name="Yarden O."/>
            <person name="Plamann M."/>
            <person name="Seiler S."/>
            <person name="Dunlap J.C."/>
            <person name="Radford A."/>
            <person name="Aramayo R."/>
            <person name="Natvig D.O."/>
            <person name="Alex L.A."/>
            <person name="Mannhaupt G."/>
            <person name="Ebbole D.J."/>
            <person name="Freitag M."/>
            <person name="Paulsen I."/>
            <person name="Sachs M.S."/>
            <person name="Lander E.S."/>
            <person name="Nusbaum C."/>
            <person name="Birren B.W."/>
        </authorList>
    </citation>
    <scope>NUCLEOTIDE SEQUENCE [LARGE SCALE GENOMIC DNA]</scope>
    <source>
        <strain>ATCC 24698 / 74-OR23-1A / CBS 708.71 / DSM 1257 / FGSC 987</strain>
    </source>
</reference>
<accession>P19752</accession>
<accession>Q7RVJ4</accession>
<sequence length="228" mass="25264">MALFPRGFYGSYGSDPSFTNLFRLLDDFDTYTREVQGSAPETGSRRHTQPTRTFSPKFDVRETEQTYELHGELPGIDRDNVQIEFTDPQTIVIRGRVERNYTAGTPPAQVAGVLTEKGEPHSPAAHHATVEDDVDEDNRSVATTATGANNQNNQQVAQRASAPTTEEKPKAPAEKYWVSERSIGEFSRTFNFPGRVDQNAVSASLNNGILTITVPKAKKHETIRIAIN</sequence>
<feature type="chain" id="PRO_0000126007" description="30 kDa heat shock protein">
    <location>
        <begin position="1"/>
        <end position="228"/>
    </location>
</feature>
<feature type="domain" description="sHSP" evidence="1">
    <location>
        <begin position="49"/>
        <end position="228"/>
    </location>
</feature>
<feature type="region of interest" description="Disordered" evidence="2">
    <location>
        <begin position="34"/>
        <end position="53"/>
    </location>
</feature>
<feature type="region of interest" description="Disordered" evidence="2">
    <location>
        <begin position="117"/>
        <end position="136"/>
    </location>
</feature>
<feature type="region of interest" description="Disordered" evidence="2">
    <location>
        <begin position="144"/>
        <end position="174"/>
    </location>
</feature>
<feature type="compositionally biased region" description="Low complexity" evidence="2">
    <location>
        <begin position="144"/>
        <end position="158"/>
    </location>
</feature>
<protein>
    <recommendedName>
        <fullName>30 kDa heat shock protein</fullName>
    </recommendedName>
</protein>
<gene>
    <name type="primary">hsp30</name>
    <name type="ORF">NCU09364</name>
</gene>
<organism>
    <name type="scientific">Neurospora crassa (strain ATCC 24698 / 74-OR23-1A / CBS 708.71 / DSM 1257 / FGSC 987)</name>
    <dbReference type="NCBI Taxonomy" id="367110"/>
    <lineage>
        <taxon>Eukaryota</taxon>
        <taxon>Fungi</taxon>
        <taxon>Dikarya</taxon>
        <taxon>Ascomycota</taxon>
        <taxon>Pezizomycotina</taxon>
        <taxon>Sordariomycetes</taxon>
        <taxon>Sordariomycetidae</taxon>
        <taxon>Sordariales</taxon>
        <taxon>Sordariaceae</taxon>
        <taxon>Neurospora</taxon>
    </lineage>
</organism>
<evidence type="ECO:0000255" key="1">
    <source>
        <dbReference type="PROSITE-ProRule" id="PRU00285"/>
    </source>
</evidence>
<evidence type="ECO:0000256" key="2">
    <source>
        <dbReference type="SAM" id="MobiDB-lite"/>
    </source>
</evidence>